<proteinExistence type="inferred from homology"/>
<evidence type="ECO:0000255" key="1">
    <source>
        <dbReference type="HAMAP-Rule" id="MF_00639"/>
    </source>
</evidence>
<reference key="1">
    <citation type="journal article" date="2005" name="PLoS Biol.">
        <title>The genome sequence of Rickettsia felis identifies the first putative conjugative plasmid in an obligate intracellular parasite.</title>
        <authorList>
            <person name="Ogata H."/>
            <person name="Renesto P."/>
            <person name="Audic S."/>
            <person name="Robert C."/>
            <person name="Blanc G."/>
            <person name="Fournier P.-E."/>
            <person name="Parinello H."/>
            <person name="Claverie J.-M."/>
            <person name="Raoult D."/>
        </authorList>
    </citation>
    <scope>NUCLEOTIDE SEQUENCE [LARGE SCALE GENOMIC DNA]</scope>
    <source>
        <strain>ATCC VR-1525 / URRWXCal2</strain>
    </source>
</reference>
<protein>
    <recommendedName>
        <fullName evidence="1">UDP-N-acetylmuramoylalanine--D-glutamate ligase</fullName>
        <ecNumber evidence="1">6.3.2.9</ecNumber>
    </recommendedName>
    <alternativeName>
        <fullName evidence="1">D-glutamic acid-adding enzyme</fullName>
    </alternativeName>
    <alternativeName>
        <fullName evidence="1">UDP-N-acetylmuramoyl-L-alanyl-D-glutamate synthetase</fullName>
    </alternativeName>
</protein>
<comment type="function">
    <text evidence="1">Cell wall formation. Catalyzes the addition of glutamate to the nucleotide precursor UDP-N-acetylmuramoyl-L-alanine (UMA).</text>
</comment>
<comment type="catalytic activity">
    <reaction evidence="1">
        <text>UDP-N-acetyl-alpha-D-muramoyl-L-alanine + D-glutamate + ATP = UDP-N-acetyl-alpha-D-muramoyl-L-alanyl-D-glutamate + ADP + phosphate + H(+)</text>
        <dbReference type="Rhea" id="RHEA:16429"/>
        <dbReference type="ChEBI" id="CHEBI:15378"/>
        <dbReference type="ChEBI" id="CHEBI:29986"/>
        <dbReference type="ChEBI" id="CHEBI:30616"/>
        <dbReference type="ChEBI" id="CHEBI:43474"/>
        <dbReference type="ChEBI" id="CHEBI:83898"/>
        <dbReference type="ChEBI" id="CHEBI:83900"/>
        <dbReference type="ChEBI" id="CHEBI:456216"/>
        <dbReference type="EC" id="6.3.2.9"/>
    </reaction>
</comment>
<comment type="pathway">
    <text evidence="1">Cell wall biogenesis; peptidoglycan biosynthesis.</text>
</comment>
<comment type="subcellular location">
    <subcellularLocation>
        <location evidence="1">Cytoplasm</location>
    </subcellularLocation>
</comment>
<comment type="similarity">
    <text evidence="1">Belongs to the MurCDEF family.</text>
</comment>
<keyword id="KW-0067">ATP-binding</keyword>
<keyword id="KW-0131">Cell cycle</keyword>
<keyword id="KW-0132">Cell division</keyword>
<keyword id="KW-0133">Cell shape</keyword>
<keyword id="KW-0961">Cell wall biogenesis/degradation</keyword>
<keyword id="KW-0963">Cytoplasm</keyword>
<keyword id="KW-0436">Ligase</keyword>
<keyword id="KW-0547">Nucleotide-binding</keyword>
<keyword id="KW-0573">Peptidoglycan synthesis</keyword>
<organism>
    <name type="scientific">Rickettsia felis (strain ATCC VR-1525 / URRWXCal2)</name>
    <name type="common">Rickettsia azadi</name>
    <dbReference type="NCBI Taxonomy" id="315456"/>
    <lineage>
        <taxon>Bacteria</taxon>
        <taxon>Pseudomonadati</taxon>
        <taxon>Pseudomonadota</taxon>
        <taxon>Alphaproteobacteria</taxon>
        <taxon>Rickettsiales</taxon>
        <taxon>Rickettsiaceae</taxon>
        <taxon>Rickettsieae</taxon>
        <taxon>Rickettsia</taxon>
        <taxon>spotted fever group</taxon>
    </lineage>
</organism>
<gene>
    <name evidence="1" type="primary">murD</name>
    <name type="ordered locus">RF_0634</name>
</gene>
<name>MURD_RICFE</name>
<feature type="chain" id="PRO_0000109072" description="UDP-N-acetylmuramoylalanine--D-glutamate ligase">
    <location>
        <begin position="1"/>
        <end position="449"/>
    </location>
</feature>
<feature type="binding site" evidence="1">
    <location>
        <begin position="111"/>
        <end position="117"/>
    </location>
    <ligand>
        <name>ATP</name>
        <dbReference type="ChEBI" id="CHEBI:30616"/>
    </ligand>
</feature>
<accession>Q4ULT8</accession>
<sequence>MNSHTKQKIGVFGLGKTGISVYEELQGKCDVIVYDDLKANRDIFEELYTNNSIAALSDSRWQNLDKIVLSPGIPLTHKIAGIAKNFNIPIISDIDLLFEKSKNLNFIAVTGTNGKSTTTALISHILNSNGLDYPVAGNIGVPALQAKASKDGYILELSSFQLDLVKTFTAKIAVLLNITPDHLDRHQDMTGYIAAKSKIFDRMDKDSYAAINIDNYYCREIFMLLQQEQRIKLIPFSVTKILKNGISVVGDKINDNDISYKLPFNKNLQGTHNCENIAASYAVAKIIGVESKKILESISSFQSLPHRMQYIGSINNIGFYNDSKATNAISAVQSIKALDNIYWLAGGIPKEGGIEEIKPYFSKIKKAYFYGQAKEIFAKTAKNIVDFVICDNLEQAFDLAYKDAVGDNAEVKNILLAPSCSSYDQFKNFEERGELFMKLSKRHCEEITK</sequence>
<dbReference type="EC" id="6.3.2.9" evidence="1"/>
<dbReference type="EMBL" id="CP000053">
    <property type="protein sequence ID" value="AAY61485.1"/>
    <property type="molecule type" value="Genomic_DNA"/>
</dbReference>
<dbReference type="SMR" id="Q4ULT8"/>
<dbReference type="STRING" id="315456.RF_0634"/>
<dbReference type="KEGG" id="rfe:RF_0634"/>
<dbReference type="eggNOG" id="COG0771">
    <property type="taxonomic scope" value="Bacteria"/>
</dbReference>
<dbReference type="HOGENOM" id="CLU_032540_3_0_5"/>
<dbReference type="OrthoDB" id="9809796at2"/>
<dbReference type="UniPathway" id="UPA00219"/>
<dbReference type="Proteomes" id="UP000008548">
    <property type="component" value="Chromosome"/>
</dbReference>
<dbReference type="GO" id="GO:0005737">
    <property type="term" value="C:cytoplasm"/>
    <property type="evidence" value="ECO:0007669"/>
    <property type="project" value="UniProtKB-SubCell"/>
</dbReference>
<dbReference type="GO" id="GO:0005524">
    <property type="term" value="F:ATP binding"/>
    <property type="evidence" value="ECO:0007669"/>
    <property type="project" value="UniProtKB-UniRule"/>
</dbReference>
<dbReference type="GO" id="GO:0004326">
    <property type="term" value="F:tetrahydrofolylpolyglutamate synthase activity"/>
    <property type="evidence" value="ECO:0007669"/>
    <property type="project" value="InterPro"/>
</dbReference>
<dbReference type="GO" id="GO:0008764">
    <property type="term" value="F:UDP-N-acetylmuramoylalanine-D-glutamate ligase activity"/>
    <property type="evidence" value="ECO:0007669"/>
    <property type="project" value="UniProtKB-UniRule"/>
</dbReference>
<dbReference type="GO" id="GO:0051301">
    <property type="term" value="P:cell division"/>
    <property type="evidence" value="ECO:0007669"/>
    <property type="project" value="UniProtKB-KW"/>
</dbReference>
<dbReference type="GO" id="GO:0071555">
    <property type="term" value="P:cell wall organization"/>
    <property type="evidence" value="ECO:0007669"/>
    <property type="project" value="UniProtKB-KW"/>
</dbReference>
<dbReference type="GO" id="GO:0009252">
    <property type="term" value="P:peptidoglycan biosynthetic process"/>
    <property type="evidence" value="ECO:0007669"/>
    <property type="project" value="UniProtKB-UniRule"/>
</dbReference>
<dbReference type="GO" id="GO:0008360">
    <property type="term" value="P:regulation of cell shape"/>
    <property type="evidence" value="ECO:0007669"/>
    <property type="project" value="UniProtKB-KW"/>
</dbReference>
<dbReference type="Gene3D" id="3.90.190.20">
    <property type="entry name" value="Mur ligase, C-terminal domain"/>
    <property type="match status" value="1"/>
</dbReference>
<dbReference type="Gene3D" id="3.40.1190.10">
    <property type="entry name" value="Mur-like, catalytic domain"/>
    <property type="match status" value="1"/>
</dbReference>
<dbReference type="Gene3D" id="3.40.50.720">
    <property type="entry name" value="NAD(P)-binding Rossmann-like Domain"/>
    <property type="match status" value="1"/>
</dbReference>
<dbReference type="HAMAP" id="MF_00639">
    <property type="entry name" value="MurD"/>
    <property type="match status" value="1"/>
</dbReference>
<dbReference type="InterPro" id="IPR018109">
    <property type="entry name" value="Folylpolyglutamate_synth_CS"/>
</dbReference>
<dbReference type="InterPro" id="IPR036565">
    <property type="entry name" value="Mur-like_cat_sf"/>
</dbReference>
<dbReference type="InterPro" id="IPR004101">
    <property type="entry name" value="Mur_ligase_C"/>
</dbReference>
<dbReference type="InterPro" id="IPR036615">
    <property type="entry name" value="Mur_ligase_C_dom_sf"/>
</dbReference>
<dbReference type="InterPro" id="IPR013221">
    <property type="entry name" value="Mur_ligase_cen"/>
</dbReference>
<dbReference type="InterPro" id="IPR005762">
    <property type="entry name" value="MurD"/>
</dbReference>
<dbReference type="NCBIfam" id="TIGR01087">
    <property type="entry name" value="murD"/>
    <property type="match status" value="1"/>
</dbReference>
<dbReference type="PANTHER" id="PTHR43692">
    <property type="entry name" value="UDP-N-ACETYLMURAMOYLALANINE--D-GLUTAMATE LIGASE"/>
    <property type="match status" value="1"/>
</dbReference>
<dbReference type="PANTHER" id="PTHR43692:SF1">
    <property type="entry name" value="UDP-N-ACETYLMURAMOYLALANINE--D-GLUTAMATE LIGASE"/>
    <property type="match status" value="1"/>
</dbReference>
<dbReference type="Pfam" id="PF02875">
    <property type="entry name" value="Mur_ligase_C"/>
    <property type="match status" value="1"/>
</dbReference>
<dbReference type="Pfam" id="PF08245">
    <property type="entry name" value="Mur_ligase_M"/>
    <property type="match status" value="1"/>
</dbReference>
<dbReference type="Pfam" id="PF21799">
    <property type="entry name" value="MurD-like_N"/>
    <property type="match status" value="1"/>
</dbReference>
<dbReference type="SUPFAM" id="SSF51984">
    <property type="entry name" value="MurCD N-terminal domain"/>
    <property type="match status" value="1"/>
</dbReference>
<dbReference type="SUPFAM" id="SSF53623">
    <property type="entry name" value="MurD-like peptide ligases, catalytic domain"/>
    <property type="match status" value="1"/>
</dbReference>
<dbReference type="SUPFAM" id="SSF53244">
    <property type="entry name" value="MurD-like peptide ligases, peptide-binding domain"/>
    <property type="match status" value="1"/>
</dbReference>